<comment type="function">
    <text evidence="1 3">Allows the formation of correctly charged Gln-tRNA(Gln) through the transamidation of misacylated Glu-tRNA(Gln) in the mitochondria. The reaction takes place in the presence of glutamine and ATP through an activated gamma-phospho-Glu-tRNA(Gln).</text>
</comment>
<comment type="catalytic activity">
    <reaction evidence="1">
        <text>L-glutamyl-tRNA(Gln) + L-glutamine + ATP + H2O = L-glutaminyl-tRNA(Gln) + L-glutamate + ADP + phosphate + H(+)</text>
        <dbReference type="Rhea" id="RHEA:17521"/>
        <dbReference type="Rhea" id="RHEA-COMP:9681"/>
        <dbReference type="Rhea" id="RHEA-COMP:9684"/>
        <dbReference type="ChEBI" id="CHEBI:15377"/>
        <dbReference type="ChEBI" id="CHEBI:15378"/>
        <dbReference type="ChEBI" id="CHEBI:29985"/>
        <dbReference type="ChEBI" id="CHEBI:30616"/>
        <dbReference type="ChEBI" id="CHEBI:43474"/>
        <dbReference type="ChEBI" id="CHEBI:58359"/>
        <dbReference type="ChEBI" id="CHEBI:78520"/>
        <dbReference type="ChEBI" id="CHEBI:78521"/>
        <dbReference type="ChEBI" id="CHEBI:456216"/>
        <dbReference type="EC" id="6.3.5.7"/>
    </reaction>
</comment>
<comment type="subunit">
    <text>Subunit of the heterotrimeric GatCAB amidotransferase (AdT) complex, composed of A (QRSL1), B (GATB) and C (GATC) subunits.</text>
</comment>
<comment type="interaction">
    <interactant intactId="EBI-2856796">
        <id>Q9H0R6</id>
    </interactant>
    <interactant intactId="EBI-6137441">
        <id>O75879</id>
        <label>GATB</label>
    </interactant>
    <organismsDiffer>false</organismsDiffer>
    <experiments>4</experiments>
</comment>
<comment type="interaction">
    <interactant intactId="EBI-2856796">
        <id>Q9H0R6</id>
    </interactant>
    <interactant intactId="EBI-6929453">
        <id>O43716</id>
        <label>GATC</label>
    </interactant>
    <organismsDiffer>false</organismsDiffer>
    <experiments>6</experiments>
</comment>
<comment type="subcellular location">
    <subcellularLocation>
        <location evidence="1 3">Mitochondrion</location>
    </subcellularLocation>
</comment>
<comment type="alternative products">
    <event type="alternative splicing"/>
    <isoform>
        <id>Q9H0R6-1</id>
        <name>1</name>
        <sequence type="displayed"/>
    </isoform>
    <isoform>
        <id>Q9H0R6-2</id>
        <name>2</name>
        <sequence type="described" ref="VSP_030773 VSP_030774"/>
    </isoform>
</comment>
<comment type="disease" evidence="4 5">
    <disease id="DI-05808">
        <name>Combined oxidative phosphorylation deficiency 40</name>
        <acronym>COXPD40</acronym>
        <description>An autosomal recessive mitochondrial disorder characterized by prenatal or infantile onset, fetal hydrops, severe hypertrophic cardiomyopathy, poor growth, sensorineural hearing loss, hepatic dysfunction, lactic acidosis, and decreased activities of mitochondrial respiratory complexes I, III, IV, and V. The disorder is lethal, with death occurring in infancy.</description>
        <dbReference type="MIM" id="618835"/>
    </disease>
    <text>The disease is caused by variants affecting the gene represented in this entry.</text>
</comment>
<comment type="similarity">
    <text evidence="1">Belongs to the amidase family. GatA subfamily.</text>
</comment>
<name>GATA_HUMAN</name>
<accession>Q9H0R6</accession>
<accession>Q5VWJ4</accession>
<accession>Q9HA60</accession>
<accession>Q9NV19</accession>
<dbReference type="EC" id="6.3.5.7" evidence="1"/>
<dbReference type="EMBL" id="AL136679">
    <property type="protein sequence ID" value="CAB66614.1"/>
    <property type="molecule type" value="mRNA"/>
</dbReference>
<dbReference type="EMBL" id="AK001851">
    <property type="protein sequence ID" value="BAA91941.1"/>
    <property type="molecule type" value="mRNA"/>
</dbReference>
<dbReference type="EMBL" id="AK022251">
    <property type="protein sequence ID" value="BAB13996.1"/>
    <property type="molecule type" value="mRNA"/>
</dbReference>
<dbReference type="EMBL" id="AK023509">
    <property type="protein sequence ID" value="BAB14592.1"/>
    <property type="molecule type" value="mRNA"/>
</dbReference>
<dbReference type="EMBL" id="AL390074">
    <property type="status" value="NOT_ANNOTATED_CDS"/>
    <property type="molecule type" value="Genomic_DNA"/>
</dbReference>
<dbReference type="EMBL" id="CH471051">
    <property type="protein sequence ID" value="EAW48407.1"/>
    <property type="molecule type" value="Genomic_DNA"/>
</dbReference>
<dbReference type="EMBL" id="BC006084">
    <property type="protein sequence ID" value="AAH06084.1"/>
    <property type="molecule type" value="mRNA"/>
</dbReference>
<dbReference type="EMBL" id="BC014389">
    <property type="protein sequence ID" value="AAH14389.1"/>
    <property type="molecule type" value="mRNA"/>
</dbReference>
<dbReference type="CCDS" id="CCDS5057.1">
    <molecule id="Q9H0R6-1"/>
</dbReference>
<dbReference type="RefSeq" id="NP_060762.3">
    <molecule id="Q9H0R6-1"/>
    <property type="nucleotide sequence ID" value="NM_018292.4"/>
</dbReference>
<dbReference type="SMR" id="Q9H0R6"/>
<dbReference type="BioGRID" id="120566">
    <property type="interactions" value="124"/>
</dbReference>
<dbReference type="ComplexPortal" id="CPX-6174">
    <property type="entry name" value="Mitochondrial glutamyl-tRNA(Gln) amidotransferase complex"/>
</dbReference>
<dbReference type="CORUM" id="Q9H0R6"/>
<dbReference type="DIP" id="DIP-48970N"/>
<dbReference type="FunCoup" id="Q9H0R6">
    <property type="interactions" value="961"/>
</dbReference>
<dbReference type="IntAct" id="Q9H0R6">
    <property type="interactions" value="62"/>
</dbReference>
<dbReference type="MINT" id="Q9H0R6"/>
<dbReference type="STRING" id="9606.ENSP00000358042"/>
<dbReference type="iPTMnet" id="Q9H0R6"/>
<dbReference type="MetOSite" id="Q9H0R6"/>
<dbReference type="PhosphoSitePlus" id="Q9H0R6"/>
<dbReference type="SwissPalm" id="Q9H0R6"/>
<dbReference type="BioMuta" id="QRSL1"/>
<dbReference type="DMDM" id="167016573"/>
<dbReference type="jPOST" id="Q9H0R6"/>
<dbReference type="MassIVE" id="Q9H0R6"/>
<dbReference type="PaxDb" id="9606-ENSP00000358042"/>
<dbReference type="PeptideAtlas" id="Q9H0R6"/>
<dbReference type="ProteomicsDB" id="80319">
    <molecule id="Q9H0R6-1"/>
</dbReference>
<dbReference type="ProteomicsDB" id="80320">
    <molecule id="Q9H0R6-2"/>
</dbReference>
<dbReference type="Pumba" id="Q9H0R6"/>
<dbReference type="Antibodypedia" id="32156">
    <property type="antibodies" value="148 antibodies from 22 providers"/>
</dbReference>
<dbReference type="DNASU" id="55278"/>
<dbReference type="Ensembl" id="ENST00000369046.8">
    <molecule id="Q9H0R6-1"/>
    <property type="protein sequence ID" value="ENSP00000358042.4"/>
    <property type="gene ID" value="ENSG00000130348.11"/>
</dbReference>
<dbReference type="GeneID" id="55278"/>
<dbReference type="KEGG" id="hsa:55278"/>
<dbReference type="MANE-Select" id="ENST00000369046.8">
    <property type="protein sequence ID" value="ENSP00000358042.4"/>
    <property type="RefSeq nucleotide sequence ID" value="NM_018292.5"/>
    <property type="RefSeq protein sequence ID" value="NP_060762.3"/>
</dbReference>
<dbReference type="UCSC" id="uc003prm.4">
    <molecule id="Q9H0R6-1"/>
    <property type="organism name" value="human"/>
</dbReference>
<dbReference type="AGR" id="HGNC:21020"/>
<dbReference type="CTD" id="55278"/>
<dbReference type="DisGeNET" id="55278"/>
<dbReference type="GeneCards" id="QRSL1"/>
<dbReference type="HGNC" id="HGNC:21020">
    <property type="gene designation" value="QRSL1"/>
</dbReference>
<dbReference type="HPA" id="ENSG00000130348">
    <property type="expression patterns" value="Low tissue specificity"/>
</dbReference>
<dbReference type="MalaCards" id="QRSL1"/>
<dbReference type="MIM" id="617209">
    <property type="type" value="gene"/>
</dbReference>
<dbReference type="MIM" id="618835">
    <property type="type" value="phenotype"/>
</dbReference>
<dbReference type="neXtProt" id="NX_Q9H0R6"/>
<dbReference type="OpenTargets" id="ENSG00000130348"/>
<dbReference type="Orphanet" id="570491">
    <property type="disease" value="QRSL1-related combined oxidative phosphorylation defect"/>
</dbReference>
<dbReference type="PharmGKB" id="PA128394680"/>
<dbReference type="VEuPathDB" id="HostDB:ENSG00000130348"/>
<dbReference type="eggNOG" id="KOG1211">
    <property type="taxonomic scope" value="Eukaryota"/>
</dbReference>
<dbReference type="GeneTree" id="ENSGT00550000074866"/>
<dbReference type="HOGENOM" id="CLU_009600_7_6_1"/>
<dbReference type="InParanoid" id="Q9H0R6"/>
<dbReference type="OMA" id="QPASYCG"/>
<dbReference type="OrthoDB" id="421993at2759"/>
<dbReference type="PAN-GO" id="Q9H0R6">
    <property type="GO annotations" value="5 GO annotations based on evolutionary models"/>
</dbReference>
<dbReference type="PhylomeDB" id="Q9H0R6"/>
<dbReference type="TreeFam" id="TF313766"/>
<dbReference type="BRENDA" id="6.3.5.7">
    <property type="organism ID" value="2681"/>
</dbReference>
<dbReference type="PathwayCommons" id="Q9H0R6"/>
<dbReference type="SignaLink" id="Q9H0R6"/>
<dbReference type="BioGRID-ORCS" id="55278">
    <property type="hits" value="431 hits in 1158 CRISPR screens"/>
</dbReference>
<dbReference type="ChiTaRS" id="QRSL1">
    <property type="organism name" value="human"/>
</dbReference>
<dbReference type="GenomeRNAi" id="55278"/>
<dbReference type="Pharos" id="Q9H0R6">
    <property type="development level" value="Tbio"/>
</dbReference>
<dbReference type="PRO" id="PR:Q9H0R6"/>
<dbReference type="Proteomes" id="UP000005640">
    <property type="component" value="Chromosome 6"/>
</dbReference>
<dbReference type="RNAct" id="Q9H0R6">
    <property type="molecule type" value="protein"/>
</dbReference>
<dbReference type="Bgee" id="ENSG00000130348">
    <property type="expression patterns" value="Expressed in forelimb stylopod muscle and 197 other cell types or tissues"/>
</dbReference>
<dbReference type="ExpressionAtlas" id="Q9H0R6">
    <property type="expression patterns" value="baseline and differential"/>
</dbReference>
<dbReference type="GO" id="GO:0030956">
    <property type="term" value="C:glutamyl-tRNA(Gln) amidotransferase complex"/>
    <property type="evidence" value="ECO:0000314"/>
    <property type="project" value="UniProtKB"/>
</dbReference>
<dbReference type="GO" id="GO:0005739">
    <property type="term" value="C:mitochondrion"/>
    <property type="evidence" value="ECO:0000314"/>
    <property type="project" value="UniProtKB"/>
</dbReference>
<dbReference type="GO" id="GO:0005524">
    <property type="term" value="F:ATP binding"/>
    <property type="evidence" value="ECO:0007669"/>
    <property type="project" value="UniProtKB-KW"/>
</dbReference>
<dbReference type="GO" id="GO:0050567">
    <property type="term" value="F:glutaminyl-tRNA synthase (glutamine-hydrolyzing) activity"/>
    <property type="evidence" value="ECO:0007669"/>
    <property type="project" value="UniProtKB-UniRule"/>
</dbReference>
<dbReference type="GO" id="GO:0070681">
    <property type="term" value="P:glutaminyl-tRNAGln biosynthesis via transamidation"/>
    <property type="evidence" value="ECO:0000314"/>
    <property type="project" value="UniProtKB"/>
</dbReference>
<dbReference type="GO" id="GO:0032543">
    <property type="term" value="P:mitochondrial translation"/>
    <property type="evidence" value="ECO:0000315"/>
    <property type="project" value="UniProtKB"/>
</dbReference>
<dbReference type="GO" id="GO:0031647">
    <property type="term" value="P:regulation of protein stability"/>
    <property type="evidence" value="ECO:0007669"/>
    <property type="project" value="Ensembl"/>
</dbReference>
<dbReference type="FunFam" id="3.90.1300.10:FF:000002">
    <property type="entry name" value="Glutamyl-tRNA(Gln) amidotransferase subunit A, mitochondrial"/>
    <property type="match status" value="1"/>
</dbReference>
<dbReference type="Gene3D" id="3.90.1300.10">
    <property type="entry name" value="Amidase signature (AS) domain"/>
    <property type="match status" value="1"/>
</dbReference>
<dbReference type="HAMAP" id="MF_00120">
    <property type="entry name" value="GatA"/>
    <property type="match status" value="1"/>
</dbReference>
<dbReference type="InterPro" id="IPR000120">
    <property type="entry name" value="Amidase"/>
</dbReference>
<dbReference type="InterPro" id="IPR023631">
    <property type="entry name" value="Amidase_dom"/>
</dbReference>
<dbReference type="InterPro" id="IPR036928">
    <property type="entry name" value="AS_sf"/>
</dbReference>
<dbReference type="InterPro" id="IPR004412">
    <property type="entry name" value="GatA"/>
</dbReference>
<dbReference type="NCBIfam" id="TIGR00132">
    <property type="entry name" value="gatA"/>
    <property type="match status" value="1"/>
</dbReference>
<dbReference type="PANTHER" id="PTHR11895:SF153">
    <property type="entry name" value="GLUTAMYL-TRNA(GLN) AMIDOTRANSFERASE SUBUNIT A, MITOCHONDRIAL"/>
    <property type="match status" value="1"/>
</dbReference>
<dbReference type="PANTHER" id="PTHR11895">
    <property type="entry name" value="TRANSAMIDASE"/>
    <property type="match status" value="1"/>
</dbReference>
<dbReference type="Pfam" id="PF01425">
    <property type="entry name" value="Amidase"/>
    <property type="match status" value="1"/>
</dbReference>
<dbReference type="SUPFAM" id="SSF75304">
    <property type="entry name" value="Amidase signature (AS) enzymes"/>
    <property type="match status" value="1"/>
</dbReference>
<feature type="chain" id="PRO_0000316767" description="Glutamyl-tRNA(Gln) amidotransferase subunit A, mitochondrial">
    <location>
        <begin position="1"/>
        <end position="528"/>
    </location>
</feature>
<feature type="region of interest" description="Disordered" evidence="2">
    <location>
        <begin position="148"/>
        <end position="167"/>
    </location>
</feature>
<feature type="active site" description="Charge relay system" evidence="1">
    <location>
        <position position="76"/>
    </location>
</feature>
<feature type="active site" description="Charge relay system" evidence="1">
    <location>
        <position position="171"/>
    </location>
</feature>
<feature type="active site" description="Acyl-ester intermediate" evidence="1">
    <location>
        <position position="195"/>
    </location>
</feature>
<feature type="splice variant" id="VSP_030773" description="In isoform 2." evidence="6">
    <original>EYLVPELSSEVQSLWSKAADL</original>
    <variation>VTFSFHYFTEILSSPIESTD</variation>
    <location>
        <begin position="284"/>
        <end position="304"/>
    </location>
</feature>
<feature type="splice variant" id="VSP_030774" description="In isoform 2." evidence="6">
    <location>
        <begin position="305"/>
        <end position="528"/>
    </location>
</feature>
<feature type="sequence variant" id="VAR_038389" description="In dbSNP:rs36016898.">
    <original>A</original>
    <variation>V</variation>
    <location>
        <position position="11"/>
    </location>
</feature>
<feature type="sequence variant" id="VAR_076270" description="In COXPD40; highly decreased glutaminyl-tRNAGln biosynthesis via transamidation; dbSNP:rs1777047446." evidence="4">
    <original>G</original>
    <variation>E</variation>
    <location>
        <position position="117"/>
    </location>
</feature>
<feature type="sequence variant" id="VAR_076271" description="In COXPD40; highly decreased glutaminyl-tRNAGln biosynthesis via transamidation; dbSNP:rs1562168768." evidence="4 5">
    <original>G</original>
    <variation>V</variation>
    <location>
        <position position="133"/>
    </location>
</feature>
<feature type="sequence variant" id="VAR_083983" description="In COXPD40." evidence="5">
    <location>
        <begin position="185"/>
        <end position="528"/>
    </location>
</feature>
<feature type="sequence variant" id="VAR_083984" description="In COXPD40; uncertain significance." evidence="5">
    <original>TRNP</original>
    <variation>NKNH</variation>
    <location>
        <begin position="196"/>
        <end position="199"/>
    </location>
</feature>
<feature type="sequence variant" id="VAR_038390" description="In dbSNP:rs34221917.">
    <original>N</original>
    <variation>S</variation>
    <location>
        <position position="263"/>
    </location>
</feature>
<feature type="sequence variant" id="VAR_083985" description="In COXPD40; uncertain significance; requires 2 nucleotide substitutions; dbSNP:rs1562173313." evidence="5">
    <original>A</original>
    <variation>L</variation>
    <location>
        <position position="427"/>
    </location>
</feature>
<feature type="sequence conflict" description="In Ref. 1; CAB66614." evidence="7" ref="1">
    <original>T</original>
    <variation>A</variation>
    <location>
        <position position="34"/>
    </location>
</feature>
<feature type="sequence conflict" description="In Ref. 1; CAB66614." evidence="7" ref="1">
    <original>Q</original>
    <variation>R</variation>
    <location>
        <position position="147"/>
    </location>
</feature>
<feature type="sequence conflict" description="In Ref. 1; CAB66614." evidence="7" ref="1">
    <original>S</original>
    <variation>P</variation>
    <location>
        <position position="172"/>
    </location>
</feature>
<proteinExistence type="evidence at protein level"/>
<keyword id="KW-0025">Alternative splicing</keyword>
<keyword id="KW-0067">ATP-binding</keyword>
<keyword id="KW-0225">Disease variant</keyword>
<keyword id="KW-0436">Ligase</keyword>
<keyword id="KW-0496">Mitochondrion</keyword>
<keyword id="KW-0547">Nucleotide-binding</keyword>
<keyword id="KW-1274">Primary mitochondrial disease</keyword>
<keyword id="KW-0648">Protein biosynthesis</keyword>
<keyword id="KW-1267">Proteomics identification</keyword>
<keyword id="KW-1185">Reference proteome</keyword>
<sequence length="528" mass="57460">MLGRSLREVSAALKQGQITPTELCQKCLSLIKKTKFLNAYITVSEEVALKQAEESEKRYKNGQSLGDLDGIPIAVKDNFSTSGIETTCASNMLKGYIPPYNATVVQKLLDQGALLMGKTNLDEFAMGSGSTDGVFGPVKNPWSYSKQYREKRKQNPHSENEDSDWLITGGSSGGSAAAVSAFTCYAALGSDTGGSTRNPAAHCGLVGFKPSYGLVSRHGLIPLVNSMDVPGILTRCVDDAAIVLGALAGPDPRDSTTVHEPINKPFMLPSLADVSKLCIGIPKEYLVPELSSEVQSLWSKAADLFESEGAKVIEVSLPHTSYSIVCYHVLCTSEVASNMARFDGLQYGHRCDIDVSTEAMYAATRREGFNDVVRGRILSGNFFLLKENYENYFVKAQKVRRLIANDFVNAFNSGVDVLLTPTTLSEAVPYLEFIKEDNRTRSAQDDIFTQAVNMAGLPAVSIPVALSNQGLPIGLQFIGRAFCDQQLLTVAKWFEKQVQFPVIQLQELMDDCSAVLENEKLASVSLKQ</sequence>
<evidence type="ECO:0000255" key="1">
    <source>
        <dbReference type="HAMAP-Rule" id="MF_03150"/>
    </source>
</evidence>
<evidence type="ECO:0000256" key="2">
    <source>
        <dbReference type="SAM" id="MobiDB-lite"/>
    </source>
</evidence>
<evidence type="ECO:0000269" key="3">
    <source>
    </source>
</evidence>
<evidence type="ECO:0000269" key="4">
    <source>
    </source>
</evidence>
<evidence type="ECO:0000269" key="5">
    <source>
    </source>
</evidence>
<evidence type="ECO:0000303" key="6">
    <source>
    </source>
</evidence>
<evidence type="ECO:0000305" key="7"/>
<gene>
    <name evidence="1" type="primary">QRSL1</name>
</gene>
<organism>
    <name type="scientific">Homo sapiens</name>
    <name type="common">Human</name>
    <dbReference type="NCBI Taxonomy" id="9606"/>
    <lineage>
        <taxon>Eukaryota</taxon>
        <taxon>Metazoa</taxon>
        <taxon>Chordata</taxon>
        <taxon>Craniata</taxon>
        <taxon>Vertebrata</taxon>
        <taxon>Euteleostomi</taxon>
        <taxon>Mammalia</taxon>
        <taxon>Eutheria</taxon>
        <taxon>Euarchontoglires</taxon>
        <taxon>Primates</taxon>
        <taxon>Haplorrhini</taxon>
        <taxon>Catarrhini</taxon>
        <taxon>Hominidae</taxon>
        <taxon>Homo</taxon>
    </lineage>
</organism>
<reference key="1">
    <citation type="journal article" date="2001" name="Genome Res.">
        <title>Towards a catalog of human genes and proteins: sequencing and analysis of 500 novel complete protein coding human cDNAs.</title>
        <authorList>
            <person name="Wiemann S."/>
            <person name="Weil B."/>
            <person name="Wellenreuther R."/>
            <person name="Gassenhuber J."/>
            <person name="Glassl S."/>
            <person name="Ansorge W."/>
            <person name="Boecher M."/>
            <person name="Bloecker H."/>
            <person name="Bauersachs S."/>
            <person name="Blum H."/>
            <person name="Lauber J."/>
            <person name="Duesterhoeft A."/>
            <person name="Beyer A."/>
            <person name="Koehrer K."/>
            <person name="Strack N."/>
            <person name="Mewes H.-W."/>
            <person name="Ottenwaelder B."/>
            <person name="Obermaier B."/>
            <person name="Tampe J."/>
            <person name="Heubner D."/>
            <person name="Wambutt R."/>
            <person name="Korn B."/>
            <person name="Klein M."/>
            <person name="Poustka A."/>
        </authorList>
    </citation>
    <scope>NUCLEOTIDE SEQUENCE [LARGE SCALE MRNA] (ISOFORM 1)</scope>
    <source>
        <tissue>Brain</tissue>
    </source>
</reference>
<reference key="2">
    <citation type="journal article" date="2004" name="Nat. Genet.">
        <title>Complete sequencing and characterization of 21,243 full-length human cDNAs.</title>
        <authorList>
            <person name="Ota T."/>
            <person name="Suzuki Y."/>
            <person name="Nishikawa T."/>
            <person name="Otsuki T."/>
            <person name="Sugiyama T."/>
            <person name="Irie R."/>
            <person name="Wakamatsu A."/>
            <person name="Hayashi K."/>
            <person name="Sato H."/>
            <person name="Nagai K."/>
            <person name="Kimura K."/>
            <person name="Makita H."/>
            <person name="Sekine M."/>
            <person name="Obayashi M."/>
            <person name="Nishi T."/>
            <person name="Shibahara T."/>
            <person name="Tanaka T."/>
            <person name="Ishii S."/>
            <person name="Yamamoto J."/>
            <person name="Saito K."/>
            <person name="Kawai Y."/>
            <person name="Isono Y."/>
            <person name="Nakamura Y."/>
            <person name="Nagahari K."/>
            <person name="Murakami K."/>
            <person name="Yasuda T."/>
            <person name="Iwayanagi T."/>
            <person name="Wagatsuma M."/>
            <person name="Shiratori A."/>
            <person name="Sudo H."/>
            <person name="Hosoiri T."/>
            <person name="Kaku Y."/>
            <person name="Kodaira H."/>
            <person name="Kondo H."/>
            <person name="Sugawara M."/>
            <person name="Takahashi M."/>
            <person name="Kanda K."/>
            <person name="Yokoi T."/>
            <person name="Furuya T."/>
            <person name="Kikkawa E."/>
            <person name="Omura Y."/>
            <person name="Abe K."/>
            <person name="Kamihara K."/>
            <person name="Katsuta N."/>
            <person name="Sato K."/>
            <person name="Tanikawa M."/>
            <person name="Yamazaki M."/>
            <person name="Ninomiya K."/>
            <person name="Ishibashi T."/>
            <person name="Yamashita H."/>
            <person name="Murakawa K."/>
            <person name="Fujimori K."/>
            <person name="Tanai H."/>
            <person name="Kimata M."/>
            <person name="Watanabe M."/>
            <person name="Hiraoka S."/>
            <person name="Chiba Y."/>
            <person name="Ishida S."/>
            <person name="Ono Y."/>
            <person name="Takiguchi S."/>
            <person name="Watanabe S."/>
            <person name="Yosida M."/>
            <person name="Hotuta T."/>
            <person name="Kusano J."/>
            <person name="Kanehori K."/>
            <person name="Takahashi-Fujii A."/>
            <person name="Hara H."/>
            <person name="Tanase T.-O."/>
            <person name="Nomura Y."/>
            <person name="Togiya S."/>
            <person name="Komai F."/>
            <person name="Hara R."/>
            <person name="Takeuchi K."/>
            <person name="Arita M."/>
            <person name="Imose N."/>
            <person name="Musashino K."/>
            <person name="Yuuki H."/>
            <person name="Oshima A."/>
            <person name="Sasaki N."/>
            <person name="Aotsuka S."/>
            <person name="Yoshikawa Y."/>
            <person name="Matsunawa H."/>
            <person name="Ichihara T."/>
            <person name="Shiohata N."/>
            <person name="Sano S."/>
            <person name="Moriya S."/>
            <person name="Momiyama H."/>
            <person name="Satoh N."/>
            <person name="Takami S."/>
            <person name="Terashima Y."/>
            <person name="Suzuki O."/>
            <person name="Nakagawa S."/>
            <person name="Senoh A."/>
            <person name="Mizoguchi H."/>
            <person name="Goto Y."/>
            <person name="Shimizu F."/>
            <person name="Wakebe H."/>
            <person name="Hishigaki H."/>
            <person name="Watanabe T."/>
            <person name="Sugiyama A."/>
            <person name="Takemoto M."/>
            <person name="Kawakami B."/>
            <person name="Yamazaki M."/>
            <person name="Watanabe K."/>
            <person name="Kumagai A."/>
            <person name="Itakura S."/>
            <person name="Fukuzumi Y."/>
            <person name="Fujimori Y."/>
            <person name="Komiyama M."/>
            <person name="Tashiro H."/>
            <person name="Tanigami A."/>
            <person name="Fujiwara T."/>
            <person name="Ono T."/>
            <person name="Yamada K."/>
            <person name="Fujii Y."/>
            <person name="Ozaki K."/>
            <person name="Hirao M."/>
            <person name="Ohmori Y."/>
            <person name="Kawabata A."/>
            <person name="Hikiji T."/>
            <person name="Kobatake N."/>
            <person name="Inagaki H."/>
            <person name="Ikema Y."/>
            <person name="Okamoto S."/>
            <person name="Okitani R."/>
            <person name="Kawakami T."/>
            <person name="Noguchi S."/>
            <person name="Itoh T."/>
            <person name="Shigeta K."/>
            <person name="Senba T."/>
            <person name="Matsumura K."/>
            <person name="Nakajima Y."/>
            <person name="Mizuno T."/>
            <person name="Morinaga M."/>
            <person name="Sasaki M."/>
            <person name="Togashi T."/>
            <person name="Oyama M."/>
            <person name="Hata H."/>
            <person name="Watanabe M."/>
            <person name="Komatsu T."/>
            <person name="Mizushima-Sugano J."/>
            <person name="Satoh T."/>
            <person name="Shirai Y."/>
            <person name="Takahashi Y."/>
            <person name="Nakagawa K."/>
            <person name="Okumura K."/>
            <person name="Nagase T."/>
            <person name="Nomura N."/>
            <person name="Kikuchi H."/>
            <person name="Masuho Y."/>
            <person name="Yamashita R."/>
            <person name="Nakai K."/>
            <person name="Yada T."/>
            <person name="Nakamura Y."/>
            <person name="Ohara O."/>
            <person name="Isogai T."/>
            <person name="Sugano S."/>
        </authorList>
    </citation>
    <scope>NUCLEOTIDE SEQUENCE [LARGE SCALE MRNA] (ISOFORMS 1 AND 2)</scope>
    <source>
        <tissue>Mammary gland</tissue>
        <tissue>Placenta</tissue>
    </source>
</reference>
<reference key="3">
    <citation type="journal article" date="2003" name="Nature">
        <title>The DNA sequence and analysis of human chromosome 6.</title>
        <authorList>
            <person name="Mungall A.J."/>
            <person name="Palmer S.A."/>
            <person name="Sims S.K."/>
            <person name="Edwards C.A."/>
            <person name="Ashurst J.L."/>
            <person name="Wilming L."/>
            <person name="Jones M.C."/>
            <person name="Horton R."/>
            <person name="Hunt S.E."/>
            <person name="Scott C.E."/>
            <person name="Gilbert J.G.R."/>
            <person name="Clamp M.E."/>
            <person name="Bethel G."/>
            <person name="Milne S."/>
            <person name="Ainscough R."/>
            <person name="Almeida J.P."/>
            <person name="Ambrose K.D."/>
            <person name="Andrews T.D."/>
            <person name="Ashwell R.I.S."/>
            <person name="Babbage A.K."/>
            <person name="Bagguley C.L."/>
            <person name="Bailey J."/>
            <person name="Banerjee R."/>
            <person name="Barker D.J."/>
            <person name="Barlow K.F."/>
            <person name="Bates K."/>
            <person name="Beare D.M."/>
            <person name="Beasley H."/>
            <person name="Beasley O."/>
            <person name="Bird C.P."/>
            <person name="Blakey S.E."/>
            <person name="Bray-Allen S."/>
            <person name="Brook J."/>
            <person name="Brown A.J."/>
            <person name="Brown J.Y."/>
            <person name="Burford D.C."/>
            <person name="Burrill W."/>
            <person name="Burton J."/>
            <person name="Carder C."/>
            <person name="Carter N.P."/>
            <person name="Chapman J.C."/>
            <person name="Clark S.Y."/>
            <person name="Clark G."/>
            <person name="Clee C.M."/>
            <person name="Clegg S."/>
            <person name="Cobley V."/>
            <person name="Collier R.E."/>
            <person name="Collins J.E."/>
            <person name="Colman L.K."/>
            <person name="Corby N.R."/>
            <person name="Coville G.J."/>
            <person name="Culley K.M."/>
            <person name="Dhami P."/>
            <person name="Davies J."/>
            <person name="Dunn M."/>
            <person name="Earthrowl M.E."/>
            <person name="Ellington A.E."/>
            <person name="Evans K.A."/>
            <person name="Faulkner L."/>
            <person name="Francis M.D."/>
            <person name="Frankish A."/>
            <person name="Frankland J."/>
            <person name="French L."/>
            <person name="Garner P."/>
            <person name="Garnett J."/>
            <person name="Ghori M.J."/>
            <person name="Gilby L.M."/>
            <person name="Gillson C.J."/>
            <person name="Glithero R.J."/>
            <person name="Grafham D.V."/>
            <person name="Grant M."/>
            <person name="Gribble S."/>
            <person name="Griffiths C."/>
            <person name="Griffiths M.N.D."/>
            <person name="Hall R."/>
            <person name="Halls K.S."/>
            <person name="Hammond S."/>
            <person name="Harley J.L."/>
            <person name="Hart E.A."/>
            <person name="Heath P.D."/>
            <person name="Heathcott R."/>
            <person name="Holmes S.J."/>
            <person name="Howden P.J."/>
            <person name="Howe K.L."/>
            <person name="Howell G.R."/>
            <person name="Huckle E."/>
            <person name="Humphray S.J."/>
            <person name="Humphries M.D."/>
            <person name="Hunt A.R."/>
            <person name="Johnson C.M."/>
            <person name="Joy A.A."/>
            <person name="Kay M."/>
            <person name="Keenan S.J."/>
            <person name="Kimberley A.M."/>
            <person name="King A."/>
            <person name="Laird G.K."/>
            <person name="Langford C."/>
            <person name="Lawlor S."/>
            <person name="Leongamornlert D.A."/>
            <person name="Leversha M."/>
            <person name="Lloyd C.R."/>
            <person name="Lloyd D.M."/>
            <person name="Loveland J.E."/>
            <person name="Lovell J."/>
            <person name="Martin S."/>
            <person name="Mashreghi-Mohammadi M."/>
            <person name="Maslen G.L."/>
            <person name="Matthews L."/>
            <person name="McCann O.T."/>
            <person name="McLaren S.J."/>
            <person name="McLay K."/>
            <person name="McMurray A."/>
            <person name="Moore M.J.F."/>
            <person name="Mullikin J.C."/>
            <person name="Niblett D."/>
            <person name="Nickerson T."/>
            <person name="Novik K.L."/>
            <person name="Oliver K."/>
            <person name="Overton-Larty E.K."/>
            <person name="Parker A."/>
            <person name="Patel R."/>
            <person name="Pearce A.V."/>
            <person name="Peck A.I."/>
            <person name="Phillimore B.J.C.T."/>
            <person name="Phillips S."/>
            <person name="Plumb R.W."/>
            <person name="Porter K.M."/>
            <person name="Ramsey Y."/>
            <person name="Ranby S.A."/>
            <person name="Rice C.M."/>
            <person name="Ross M.T."/>
            <person name="Searle S.M."/>
            <person name="Sehra H.K."/>
            <person name="Sheridan E."/>
            <person name="Skuce C.D."/>
            <person name="Smith S."/>
            <person name="Smith M."/>
            <person name="Spraggon L."/>
            <person name="Squares S.L."/>
            <person name="Steward C.A."/>
            <person name="Sycamore N."/>
            <person name="Tamlyn-Hall G."/>
            <person name="Tester J."/>
            <person name="Theaker A.J."/>
            <person name="Thomas D.W."/>
            <person name="Thorpe A."/>
            <person name="Tracey A."/>
            <person name="Tromans A."/>
            <person name="Tubby B."/>
            <person name="Wall M."/>
            <person name="Wallis J.M."/>
            <person name="West A.P."/>
            <person name="White S.S."/>
            <person name="Whitehead S.L."/>
            <person name="Whittaker H."/>
            <person name="Wild A."/>
            <person name="Willey D.J."/>
            <person name="Wilmer T.E."/>
            <person name="Wood J.M."/>
            <person name="Wray P.W."/>
            <person name="Wyatt J.C."/>
            <person name="Young L."/>
            <person name="Younger R.M."/>
            <person name="Bentley D.R."/>
            <person name="Coulson A."/>
            <person name="Durbin R.M."/>
            <person name="Hubbard T."/>
            <person name="Sulston J.E."/>
            <person name="Dunham I."/>
            <person name="Rogers J."/>
            <person name="Beck S."/>
        </authorList>
    </citation>
    <scope>NUCLEOTIDE SEQUENCE [LARGE SCALE GENOMIC DNA]</scope>
</reference>
<reference key="4">
    <citation type="submission" date="2005-09" db="EMBL/GenBank/DDBJ databases">
        <authorList>
            <person name="Mural R.J."/>
            <person name="Istrail S."/>
            <person name="Sutton G.G."/>
            <person name="Florea L."/>
            <person name="Halpern A.L."/>
            <person name="Mobarry C.M."/>
            <person name="Lippert R."/>
            <person name="Walenz B."/>
            <person name="Shatkay H."/>
            <person name="Dew I."/>
            <person name="Miller J.R."/>
            <person name="Flanigan M.J."/>
            <person name="Edwards N.J."/>
            <person name="Bolanos R."/>
            <person name="Fasulo D."/>
            <person name="Halldorsson B.V."/>
            <person name="Hannenhalli S."/>
            <person name="Turner R."/>
            <person name="Yooseph S."/>
            <person name="Lu F."/>
            <person name="Nusskern D.R."/>
            <person name="Shue B.C."/>
            <person name="Zheng X.H."/>
            <person name="Zhong F."/>
            <person name="Delcher A.L."/>
            <person name="Huson D.H."/>
            <person name="Kravitz S.A."/>
            <person name="Mouchard L."/>
            <person name="Reinert K."/>
            <person name="Remington K.A."/>
            <person name="Clark A.G."/>
            <person name="Waterman M.S."/>
            <person name="Eichler E.E."/>
            <person name="Adams M.D."/>
            <person name="Hunkapiller M.W."/>
            <person name="Myers E.W."/>
            <person name="Venter J.C."/>
        </authorList>
    </citation>
    <scope>NUCLEOTIDE SEQUENCE [LARGE SCALE GENOMIC DNA]</scope>
</reference>
<reference key="5">
    <citation type="journal article" date="2004" name="Genome Res.">
        <title>The status, quality, and expansion of the NIH full-length cDNA project: the Mammalian Gene Collection (MGC).</title>
        <authorList>
            <consortium name="The MGC Project Team"/>
        </authorList>
    </citation>
    <scope>NUCLEOTIDE SEQUENCE [LARGE SCALE MRNA] (ISOFORM 1)</scope>
    <source>
        <tissue>Placenta</tissue>
        <tissue>Uterus</tissue>
    </source>
</reference>
<reference key="6">
    <citation type="journal article" date="2009" name="Proc. Natl. Acad. Sci. U.S.A.">
        <title>Biogenesis of glutaminyl-mt tRNAGln in human mitochondria.</title>
        <authorList>
            <person name="Nagao A."/>
            <person name="Suzuki T."/>
            <person name="Katoh T."/>
            <person name="Sakaguchi Y."/>
            <person name="Suzuki T."/>
        </authorList>
    </citation>
    <scope>FUNCTION</scope>
    <scope>SUBCELLULAR LOCATION</scope>
</reference>
<reference key="7">
    <citation type="journal article" date="2011" name="BMC Syst. Biol.">
        <title>Initial characterization of the human central proteome.</title>
        <authorList>
            <person name="Burkard T.R."/>
            <person name="Planyavsky M."/>
            <person name="Kaupe I."/>
            <person name="Breitwieser F.P."/>
            <person name="Buerckstuemmer T."/>
            <person name="Bennett K.L."/>
            <person name="Superti-Furga G."/>
            <person name="Colinge J."/>
        </authorList>
    </citation>
    <scope>IDENTIFICATION BY MASS SPECTROMETRY [LARGE SCALE ANALYSIS]</scope>
</reference>
<reference key="8">
    <citation type="journal article" date="2016" name="PLoS Genet.">
        <title>A comprehensive genomic analysis reveals the genetic landscape of mitochondrial respiratory chain complex deficiencies.</title>
        <authorList>
            <person name="Kohda M."/>
            <person name="Tokuzawa Y."/>
            <person name="Kishita Y."/>
            <person name="Nyuzuki H."/>
            <person name="Moriyama Y."/>
            <person name="Mizuno Y."/>
            <person name="Hirata T."/>
            <person name="Yatsuka Y."/>
            <person name="Yamashita-Sugahara Y."/>
            <person name="Nakachi Y."/>
            <person name="Kato H."/>
            <person name="Okuda A."/>
            <person name="Tamaru S."/>
            <person name="Borna N.N."/>
            <person name="Banshoya K."/>
            <person name="Aigaki T."/>
            <person name="Sato-Miyata Y."/>
            <person name="Ohnuma K."/>
            <person name="Suzuki T."/>
            <person name="Nagao A."/>
            <person name="Maehata H."/>
            <person name="Matsuda F."/>
            <person name="Higasa K."/>
            <person name="Nagasaki M."/>
            <person name="Yasuda J."/>
            <person name="Yamamoto M."/>
            <person name="Fushimi T."/>
            <person name="Shimura M."/>
            <person name="Kaiho-Ichimoto K."/>
            <person name="Harashima H."/>
            <person name="Yamazaki T."/>
            <person name="Mori M."/>
            <person name="Murayama K."/>
            <person name="Ohtake A."/>
            <person name="Okazaki Y."/>
        </authorList>
    </citation>
    <scope>INVOLVEMENT IN COXPD40</scope>
    <scope>VARIANTS COXPD40 GLU-117 AND VAL-133</scope>
    <scope>CHARACTERIZATION OF VARIANTS COXPD40 GLU-117 AND VAL-133</scope>
</reference>
<reference key="9">
    <citation type="journal article" date="2018" name="Nat. Commun.">
        <title>Pathogenic variants in glutamyl-tRNAGln amidotransferase subunits cause a lethal mitochondrial cardiomyopathy disorder.</title>
        <authorList>
            <person name="Friederich M.W."/>
            <person name="Timal S."/>
            <person name="Powell C.A."/>
            <person name="Dallabona C."/>
            <person name="Kurolap A."/>
            <person name="Palacios-Zambrano S."/>
            <person name="Bratkovic D."/>
            <person name="Derks T.G.J."/>
            <person name="Bick D."/>
            <person name="Bouman K."/>
            <person name="Chatfield K.C."/>
            <person name="Damouny-Naoum N."/>
            <person name="Dishop M.K."/>
            <person name="Falik-Zaccai T.C."/>
            <person name="Fares F."/>
            <person name="Fedida A."/>
            <person name="Ferrero I."/>
            <person name="Gallagher R.C."/>
            <person name="Garesse R."/>
            <person name="Gilberti M."/>
            <person name="Gonzalez C."/>
            <person name="Gowan K."/>
            <person name="Habib C."/>
            <person name="Halligan R.K."/>
            <person name="Kalfon L."/>
            <person name="Knight K."/>
            <person name="Lefeber D."/>
            <person name="Mamblona L."/>
            <person name="Mandel H."/>
            <person name="Mory A."/>
            <person name="Ottoson J."/>
            <person name="Paperna T."/>
            <person name="Pruijn G.J.M."/>
            <person name="Rebelo-Guiomar P.F."/>
            <person name="Saada A."/>
            <person name="Sainz B. Jr."/>
            <person name="Salvemini H."/>
            <person name="Schoots M.H."/>
            <person name="Smeitink J.A."/>
            <person name="Szukszto M.J."/>
            <person name="Ter Horst H.J."/>
            <person name="van den Brandt F."/>
            <person name="van Spronsen F.J."/>
            <person name="Veltman J.A."/>
            <person name="Wartchow E."/>
            <person name="Wintjes L.T."/>
            <person name="Zohar Y."/>
            <person name="Fernandez-Moreno M.A."/>
            <person name="Baris H.N."/>
            <person name="Donnini C."/>
            <person name="Minczuk M."/>
            <person name="Rodenburg R.J."/>
            <person name="Van Hove J.L.K."/>
        </authorList>
    </citation>
    <scope>VARIANTS COXPD40 VAL-133; 185-TYR--GLN-528 DEL; 196-THR--PRO-199 DELINS ASN-LYS-ASN-HIS AND LEU-427</scope>
</reference>
<protein>
    <recommendedName>
        <fullName evidence="1">Glutamyl-tRNA(Gln) amidotransferase subunit A, mitochondrial</fullName>
        <shortName evidence="1">Glu-AdT subunit A</shortName>
        <ecNumber evidence="1">6.3.5.7</ecNumber>
    </recommendedName>
    <alternativeName>
        <fullName evidence="1">Glutaminyl-tRNA synthase-like protein 1</fullName>
    </alternativeName>
</protein>